<evidence type="ECO:0000250" key="1"/>
<evidence type="ECO:0000256" key="2">
    <source>
        <dbReference type="SAM" id="MobiDB-lite"/>
    </source>
</evidence>
<evidence type="ECO:0000305" key="3"/>
<feature type="chain" id="PRO_0000091323" description="Elongation factor Tu">
    <location>
        <begin position="1"/>
        <end position="46" status="greater than"/>
    </location>
</feature>
<feature type="region of interest" description="Disordered" evidence="2">
    <location>
        <begin position="1"/>
        <end position="20"/>
    </location>
</feature>
<feature type="compositionally biased region" description="Basic and acidic residues" evidence="2">
    <location>
        <begin position="1"/>
        <end position="10"/>
    </location>
</feature>
<feature type="binding site" evidence="1">
    <location>
        <begin position="19"/>
        <end position="26"/>
    </location>
    <ligand>
        <name>GTP</name>
        <dbReference type="ChEBI" id="CHEBI:37565"/>
    </ligand>
</feature>
<feature type="non-terminal residue">
    <location>
        <position position="46"/>
    </location>
</feature>
<protein>
    <recommendedName>
        <fullName>Elongation factor Tu</fullName>
        <shortName>EF-Tu</shortName>
    </recommendedName>
</protein>
<dbReference type="EMBL" id="Z12610">
    <property type="protein sequence ID" value="CAA78258.1"/>
    <property type="molecule type" value="Genomic_DNA"/>
</dbReference>
<dbReference type="PIR" id="S23851">
    <property type="entry name" value="S23851"/>
</dbReference>
<dbReference type="SMR" id="P35644"/>
<dbReference type="STRING" id="539.A7P85_03860"/>
<dbReference type="GO" id="GO:0005737">
    <property type="term" value="C:cytoplasm"/>
    <property type="evidence" value="ECO:0007669"/>
    <property type="project" value="UniProtKB-SubCell"/>
</dbReference>
<dbReference type="GO" id="GO:0005525">
    <property type="term" value="F:GTP binding"/>
    <property type="evidence" value="ECO:0007669"/>
    <property type="project" value="UniProtKB-KW"/>
</dbReference>
<dbReference type="GO" id="GO:0003924">
    <property type="term" value="F:GTPase activity"/>
    <property type="evidence" value="ECO:0007669"/>
    <property type="project" value="InterPro"/>
</dbReference>
<dbReference type="GO" id="GO:0003746">
    <property type="term" value="F:translation elongation factor activity"/>
    <property type="evidence" value="ECO:0007669"/>
    <property type="project" value="UniProtKB-KW"/>
</dbReference>
<dbReference type="Gene3D" id="3.40.50.300">
    <property type="entry name" value="P-loop containing nucleotide triphosphate hydrolases"/>
    <property type="match status" value="1"/>
</dbReference>
<dbReference type="InterPro" id="IPR050055">
    <property type="entry name" value="EF-Tu_GTPase"/>
</dbReference>
<dbReference type="InterPro" id="IPR027417">
    <property type="entry name" value="P-loop_NTPase"/>
</dbReference>
<dbReference type="InterPro" id="IPR000795">
    <property type="entry name" value="T_Tr_GTP-bd_dom"/>
</dbReference>
<dbReference type="PANTHER" id="PTHR43721:SF22">
    <property type="entry name" value="ELONGATION FACTOR TU, MITOCHONDRIAL"/>
    <property type="match status" value="1"/>
</dbReference>
<dbReference type="PANTHER" id="PTHR43721">
    <property type="entry name" value="ELONGATION FACTOR TU-RELATED"/>
    <property type="match status" value="1"/>
</dbReference>
<dbReference type="Pfam" id="PF00009">
    <property type="entry name" value="GTP_EFTU"/>
    <property type="match status" value="1"/>
</dbReference>
<dbReference type="SUPFAM" id="SSF52540">
    <property type="entry name" value="P-loop containing nucleoside triphosphate hydrolases"/>
    <property type="match status" value="1"/>
</dbReference>
<reference key="1">
    <citation type="journal article" date="1993" name="J. Gen. Microbiol.">
        <title>Cloning, characterization and sequencing of two haemagglutinin genes from Eikenella corrodens.</title>
        <authorList>
            <person name="Rao V.K."/>
            <person name="Whitlock J.A."/>
            <person name="Progulske-Fox A."/>
        </authorList>
    </citation>
    <scope>NUCLEOTIDE SEQUENCE [GENOMIC DNA]</scope>
    <source>
        <strain>ATCC 23834 / DSM 8340 / JCM 12952 / KCTC 15198 / LMG 15557 / NCTC 10596 / 333/54-55</strain>
    </source>
</reference>
<comment type="function">
    <text evidence="1">This protein promotes the GTP-dependent binding of aminoacyl-tRNA to the A-site of ribosomes during protein biosynthesis.</text>
</comment>
<comment type="subunit">
    <text evidence="1">Monomer.</text>
</comment>
<comment type="subcellular location">
    <subcellularLocation>
        <location evidence="1">Cytoplasm</location>
    </subcellularLocation>
</comment>
<comment type="similarity">
    <text evidence="3">Belongs to the GTP-binding elongation factor family. EF-Tu/EF-1A subfamily.</text>
</comment>
<accession>P35644</accession>
<proteinExistence type="inferred from homology"/>
<name>EFTU_EIKCO</name>
<keyword id="KW-0963">Cytoplasm</keyword>
<keyword id="KW-0251">Elongation factor</keyword>
<keyword id="KW-0342">GTP-binding</keyword>
<keyword id="KW-0547">Nucleotide-binding</keyword>
<keyword id="KW-0648">Protein biosynthesis</keyword>
<gene>
    <name type="primary">tufA</name>
</gene>
<sequence length="46" mass="4819">MAKGKFERSKPHVNVGTIGHVDHGKTTLTAALTTILAEKFGGQAKA</sequence>
<organism>
    <name type="scientific">Eikenella corrodens</name>
    <dbReference type="NCBI Taxonomy" id="539"/>
    <lineage>
        <taxon>Bacteria</taxon>
        <taxon>Pseudomonadati</taxon>
        <taxon>Pseudomonadota</taxon>
        <taxon>Betaproteobacteria</taxon>
        <taxon>Neisseriales</taxon>
        <taxon>Neisseriaceae</taxon>
        <taxon>Eikenella</taxon>
    </lineage>
</organism>